<comment type="PTM">
    <text>Exported by the Tat system. The position of the signal peptide cleavage has not been experimentally proven. Can also be exported by the Sec system.</text>
</comment>
<comment type="sequence caution" evidence="3">
    <conflict type="erroneous initiation">
        <sequence resource="EMBL-CDS" id="AAA79817"/>
    </conflict>
    <text>Extended N-terminus.</text>
</comment>
<gene>
    <name type="primary">yfhG</name>
    <name type="ordered locus">b2555</name>
    <name type="ordered locus">JW2539</name>
</gene>
<protein>
    <recommendedName>
        <fullName>Uncharacterized protein YfhG</fullName>
    </recommendedName>
</protein>
<feature type="signal peptide" description="Tat-type signal" evidence="1">
    <location>
        <begin position="1"/>
        <end position="25"/>
    </location>
</feature>
<feature type="chain" id="PRO_0000169249" description="Uncharacterized protein YfhG">
    <location>
        <begin position="26"/>
        <end position="237"/>
    </location>
</feature>
<feature type="region of interest" description="Disordered" evidence="2">
    <location>
        <begin position="201"/>
        <end position="237"/>
    </location>
</feature>
<name>YFHG_ECOLI</name>
<dbReference type="EMBL" id="S67014">
    <property type="protein sequence ID" value="AAB28777.1"/>
    <property type="molecule type" value="Genomic_DNA"/>
</dbReference>
<dbReference type="EMBL" id="U36841">
    <property type="protein sequence ID" value="AAA79817.1"/>
    <property type="status" value="ALT_INIT"/>
    <property type="molecule type" value="Genomic_DNA"/>
</dbReference>
<dbReference type="EMBL" id="U00096">
    <property type="protein sequence ID" value="AAC75608.1"/>
    <property type="molecule type" value="Genomic_DNA"/>
</dbReference>
<dbReference type="EMBL" id="AP009048">
    <property type="protein sequence ID" value="BAA16463.2"/>
    <property type="molecule type" value="Genomic_DNA"/>
</dbReference>
<dbReference type="PIR" id="A49940">
    <property type="entry name" value="A49940"/>
</dbReference>
<dbReference type="RefSeq" id="NP_417050.1">
    <property type="nucleotide sequence ID" value="NC_000913.3"/>
</dbReference>
<dbReference type="SMR" id="P0AD44"/>
<dbReference type="BioGRID" id="4259203">
    <property type="interactions" value="14"/>
</dbReference>
<dbReference type="FunCoup" id="P0AD44">
    <property type="interactions" value="12"/>
</dbReference>
<dbReference type="STRING" id="511145.b2555"/>
<dbReference type="jPOST" id="P0AD44"/>
<dbReference type="PaxDb" id="511145-b2555"/>
<dbReference type="EnsemblBacteria" id="AAC75608">
    <property type="protein sequence ID" value="AAC75608"/>
    <property type="gene ID" value="b2555"/>
</dbReference>
<dbReference type="GeneID" id="947010"/>
<dbReference type="KEGG" id="ecj:JW2539"/>
<dbReference type="KEGG" id="eco:b2555"/>
<dbReference type="KEGG" id="ecoc:C3026_14145"/>
<dbReference type="PATRIC" id="fig|511145.12.peg.2657"/>
<dbReference type="EchoBASE" id="EB2060"/>
<dbReference type="eggNOG" id="COG3170">
    <property type="taxonomic scope" value="Bacteria"/>
</dbReference>
<dbReference type="HOGENOM" id="CLU_068067_1_0_6"/>
<dbReference type="InParanoid" id="P0AD44"/>
<dbReference type="OMA" id="SLYWLRA"/>
<dbReference type="OrthoDB" id="6485482at2"/>
<dbReference type="PhylomeDB" id="P0AD44"/>
<dbReference type="BioCyc" id="EcoCyc:EG12139-MONOMER"/>
<dbReference type="PRO" id="PR:P0AD44"/>
<dbReference type="Proteomes" id="UP000000625">
    <property type="component" value="Chromosome"/>
</dbReference>
<dbReference type="GO" id="GO:0030288">
    <property type="term" value="C:outer membrane-bounded periplasmic space"/>
    <property type="evidence" value="ECO:0000314"/>
    <property type="project" value="EcoCyc"/>
</dbReference>
<dbReference type="GO" id="GO:0070297">
    <property type="term" value="P:regulation of phosphorelay signal transduction system"/>
    <property type="evidence" value="ECO:0000314"/>
    <property type="project" value="EcoCyc"/>
</dbReference>
<dbReference type="InterPro" id="IPR025262">
    <property type="entry name" value="QseG"/>
</dbReference>
<dbReference type="NCBIfam" id="NF007997">
    <property type="entry name" value="PRK10722.1"/>
    <property type="match status" value="1"/>
</dbReference>
<dbReference type="Pfam" id="PF13942">
    <property type="entry name" value="Lipoprotein_20"/>
    <property type="match status" value="1"/>
</dbReference>
<accession>P0AD44</accession>
<accession>P37328</accession>
<accession>P76997</accession>
<evidence type="ECO:0000255" key="1"/>
<evidence type="ECO:0000256" key="2">
    <source>
        <dbReference type="SAM" id="MobiDB-lite"/>
    </source>
</evidence>
<evidence type="ECO:0000305" key="3"/>
<organism>
    <name type="scientific">Escherichia coli (strain K12)</name>
    <dbReference type="NCBI Taxonomy" id="83333"/>
    <lineage>
        <taxon>Bacteria</taxon>
        <taxon>Pseudomonadati</taxon>
        <taxon>Pseudomonadota</taxon>
        <taxon>Gammaproteobacteria</taxon>
        <taxon>Enterobacterales</taxon>
        <taxon>Enterobacteriaceae</taxon>
        <taxon>Escherichia</taxon>
    </lineage>
</organism>
<keyword id="KW-1185">Reference proteome</keyword>
<keyword id="KW-0732">Signal</keyword>
<proteinExistence type="inferred from homology"/>
<sequence>MRHIFQRLLPRRLWLAGLPCLALLGCVQNHNKPAIDTPAEEKIPVYQLADYLSTECSDIWALQGKSTETNPLYWLRAMDCADRLMPAQSRQQARQYDDGSWQNTFKQGILLADAKITPYERRQLVARIEALSTEIPAQVRPLYQLWRDGQALQLQLAEERQRYSKLQQSSDSELDTLRQQHHVLQQQLELTTRKLENLTDIERQLSTRKPAGNFSPDTPHESEKPAPSTHEVTPDEP</sequence>
<reference key="1">
    <citation type="journal article" date="1993" name="J. Bacteriol.">
        <title>The glnB region of the Escherichia coli chromosome.</title>
        <authorList>
            <person name="Liu J."/>
            <person name="Magasanik B."/>
        </authorList>
    </citation>
    <scope>NUCLEOTIDE SEQUENCE [GENOMIC DNA]</scope>
</reference>
<reference key="2">
    <citation type="journal article" date="1997" name="Science">
        <title>The complete genome sequence of Escherichia coli K-12.</title>
        <authorList>
            <person name="Blattner F.R."/>
            <person name="Plunkett G. III"/>
            <person name="Bloch C.A."/>
            <person name="Perna N.T."/>
            <person name="Burland V."/>
            <person name="Riley M."/>
            <person name="Collado-Vides J."/>
            <person name="Glasner J.D."/>
            <person name="Rode C.K."/>
            <person name="Mayhew G.F."/>
            <person name="Gregor J."/>
            <person name="Davis N.W."/>
            <person name="Kirkpatrick H.A."/>
            <person name="Goeden M.A."/>
            <person name="Rose D.J."/>
            <person name="Mau B."/>
            <person name="Shao Y."/>
        </authorList>
    </citation>
    <scope>NUCLEOTIDE SEQUENCE [LARGE SCALE GENOMIC DNA]</scope>
    <source>
        <strain>K12 / MG1655 / ATCC 47076</strain>
    </source>
</reference>
<reference key="3">
    <citation type="journal article" date="2006" name="Mol. Syst. Biol.">
        <title>Highly accurate genome sequences of Escherichia coli K-12 strains MG1655 and W3110.</title>
        <authorList>
            <person name="Hayashi K."/>
            <person name="Morooka N."/>
            <person name="Yamamoto Y."/>
            <person name="Fujita K."/>
            <person name="Isono K."/>
            <person name="Choi S."/>
            <person name="Ohtsubo E."/>
            <person name="Baba T."/>
            <person name="Wanner B.L."/>
            <person name="Mori H."/>
            <person name="Horiuchi T."/>
        </authorList>
    </citation>
    <scope>NUCLEOTIDE SEQUENCE [LARGE SCALE GENOMIC DNA]</scope>
    <source>
        <strain>K12 / W3110 / ATCC 27325 / DSM 5911</strain>
    </source>
</reference>
<reference key="4">
    <citation type="journal article" date="1997" name="DNA Res.">
        <title>Construction of a contiguous 874-kb sequence of the Escherichia coli-K12 genome corresponding to 50.0-68.8 min on the linkage map and analysis of its sequence features.</title>
        <authorList>
            <person name="Yamamoto Y."/>
            <person name="Aiba H."/>
            <person name="Baba T."/>
            <person name="Hayashi K."/>
            <person name="Inada T."/>
            <person name="Isono K."/>
            <person name="Itoh T."/>
            <person name="Kimura S."/>
            <person name="Kitagawa M."/>
            <person name="Makino K."/>
            <person name="Miki T."/>
            <person name="Mitsuhashi N."/>
            <person name="Mizobuchi K."/>
            <person name="Mori H."/>
            <person name="Nakade S."/>
            <person name="Nakamura Y."/>
            <person name="Nashimoto H."/>
            <person name="Oshima T."/>
            <person name="Oyama S."/>
            <person name="Saito N."/>
            <person name="Sampei G."/>
            <person name="Satoh Y."/>
            <person name="Sivasundaram S."/>
            <person name="Tagami H."/>
            <person name="Takahashi H."/>
            <person name="Takeda J."/>
            <person name="Takemoto K."/>
            <person name="Uehara K."/>
            <person name="Wada C."/>
            <person name="Yamagata S."/>
            <person name="Horiuchi T."/>
        </authorList>
    </citation>
    <scope>NUCLEOTIDE SEQUENCE [LARGE SCALE GENOMIC DNA] OF 135-237</scope>
    <source>
        <strain>K12 / W3110 / ATCC 27325 / DSM 5911</strain>
    </source>
</reference>
<reference key="5">
    <citation type="journal article" date="2007" name="J. Biol. Chem.">
        <title>Export pathway selectivity of Escherichia coli twin arginine translocation signal peptides.</title>
        <authorList>
            <person name="Tullman-Ercek D."/>
            <person name="DeLisa M.P."/>
            <person name="Kawarasaki Y."/>
            <person name="Iranpour P."/>
            <person name="Ribnicky B."/>
            <person name="Palmer T."/>
            <person name="Georgiou G."/>
        </authorList>
    </citation>
    <scope>EXPORT VIA THE TAT-SYSTEM AND THE SEC-SYSTEM</scope>
</reference>